<protein>
    <recommendedName>
        <fullName>Glucose-fructose oxidoreductase domain-containing protein 2</fullName>
        <ecNumber>1.-.-.-</ecNumber>
    </recommendedName>
</protein>
<evidence type="ECO:0000255" key="1"/>
<evidence type="ECO:0000269" key="2">
    <source>
    </source>
</evidence>
<evidence type="ECO:0000305" key="3"/>
<organism>
    <name type="scientific">Mus musculus</name>
    <name type="common">Mouse</name>
    <dbReference type="NCBI Taxonomy" id="10090"/>
    <lineage>
        <taxon>Eukaryota</taxon>
        <taxon>Metazoa</taxon>
        <taxon>Chordata</taxon>
        <taxon>Craniata</taxon>
        <taxon>Vertebrata</taxon>
        <taxon>Euteleostomi</taxon>
        <taxon>Mammalia</taxon>
        <taxon>Eutheria</taxon>
        <taxon>Euarchontoglires</taxon>
        <taxon>Glires</taxon>
        <taxon>Rodentia</taxon>
        <taxon>Myomorpha</taxon>
        <taxon>Muroidea</taxon>
        <taxon>Muridae</taxon>
        <taxon>Murinae</taxon>
        <taxon>Mus</taxon>
        <taxon>Mus</taxon>
    </lineage>
</organism>
<accession>Q9CYH5</accession>
<sequence>MKLLPGVGVFGTGSSARVLVPLLRAEGFTVEALWGKTEEEAKQLAEEMNITFYTSRTDDVLLHQDVDLVCINIPPPLTRQISVKALGIGKNVVCEKAATSMDAFRMVTASRYYPQLMSLVGNVLRFLPAFVRMKQLIAEHYVGAVMICDARIYSGSLLSPSYGWICDELMGGGGLHTMGTYIVDLLTHLTGQKAEKVHGLLKTFVRQNATIRGIRHVTSDDFCFFQMLMGGGVCSTVTLNFNMPGAFVHEVMVVGSAGRLVARGADLYGQKNSAAQEELLVRDSLAVGAGLPEQGPQDVPLLYLKGMVYMVQALRQSFQGQGDRRTWDRTPVSMAASFEDGLYMQSVVDAIKRSSRSGEWETVEMLAEEPDANQNLSETLQRNNL</sequence>
<reference key="1">
    <citation type="journal article" date="2005" name="Science">
        <title>The transcriptional landscape of the mammalian genome.</title>
        <authorList>
            <person name="Carninci P."/>
            <person name="Kasukawa T."/>
            <person name="Katayama S."/>
            <person name="Gough J."/>
            <person name="Frith M.C."/>
            <person name="Maeda N."/>
            <person name="Oyama R."/>
            <person name="Ravasi T."/>
            <person name="Lenhard B."/>
            <person name="Wells C."/>
            <person name="Kodzius R."/>
            <person name="Shimokawa K."/>
            <person name="Bajic V.B."/>
            <person name="Brenner S.E."/>
            <person name="Batalov S."/>
            <person name="Forrest A.R."/>
            <person name="Zavolan M."/>
            <person name="Davis M.J."/>
            <person name="Wilming L.G."/>
            <person name="Aidinis V."/>
            <person name="Allen J.E."/>
            <person name="Ambesi-Impiombato A."/>
            <person name="Apweiler R."/>
            <person name="Aturaliya R.N."/>
            <person name="Bailey T.L."/>
            <person name="Bansal M."/>
            <person name="Baxter L."/>
            <person name="Beisel K.W."/>
            <person name="Bersano T."/>
            <person name="Bono H."/>
            <person name="Chalk A.M."/>
            <person name="Chiu K.P."/>
            <person name="Choudhary V."/>
            <person name="Christoffels A."/>
            <person name="Clutterbuck D.R."/>
            <person name="Crowe M.L."/>
            <person name="Dalla E."/>
            <person name="Dalrymple B.P."/>
            <person name="de Bono B."/>
            <person name="Della Gatta G."/>
            <person name="di Bernardo D."/>
            <person name="Down T."/>
            <person name="Engstrom P."/>
            <person name="Fagiolini M."/>
            <person name="Faulkner G."/>
            <person name="Fletcher C.F."/>
            <person name="Fukushima T."/>
            <person name="Furuno M."/>
            <person name="Futaki S."/>
            <person name="Gariboldi M."/>
            <person name="Georgii-Hemming P."/>
            <person name="Gingeras T.R."/>
            <person name="Gojobori T."/>
            <person name="Green R.E."/>
            <person name="Gustincich S."/>
            <person name="Harbers M."/>
            <person name="Hayashi Y."/>
            <person name="Hensch T.K."/>
            <person name="Hirokawa N."/>
            <person name="Hill D."/>
            <person name="Huminiecki L."/>
            <person name="Iacono M."/>
            <person name="Ikeo K."/>
            <person name="Iwama A."/>
            <person name="Ishikawa T."/>
            <person name="Jakt M."/>
            <person name="Kanapin A."/>
            <person name="Katoh M."/>
            <person name="Kawasawa Y."/>
            <person name="Kelso J."/>
            <person name="Kitamura H."/>
            <person name="Kitano H."/>
            <person name="Kollias G."/>
            <person name="Krishnan S.P."/>
            <person name="Kruger A."/>
            <person name="Kummerfeld S.K."/>
            <person name="Kurochkin I.V."/>
            <person name="Lareau L.F."/>
            <person name="Lazarevic D."/>
            <person name="Lipovich L."/>
            <person name="Liu J."/>
            <person name="Liuni S."/>
            <person name="McWilliam S."/>
            <person name="Madan Babu M."/>
            <person name="Madera M."/>
            <person name="Marchionni L."/>
            <person name="Matsuda H."/>
            <person name="Matsuzawa S."/>
            <person name="Miki H."/>
            <person name="Mignone F."/>
            <person name="Miyake S."/>
            <person name="Morris K."/>
            <person name="Mottagui-Tabar S."/>
            <person name="Mulder N."/>
            <person name="Nakano N."/>
            <person name="Nakauchi H."/>
            <person name="Ng P."/>
            <person name="Nilsson R."/>
            <person name="Nishiguchi S."/>
            <person name="Nishikawa S."/>
            <person name="Nori F."/>
            <person name="Ohara O."/>
            <person name="Okazaki Y."/>
            <person name="Orlando V."/>
            <person name="Pang K.C."/>
            <person name="Pavan W.J."/>
            <person name="Pavesi G."/>
            <person name="Pesole G."/>
            <person name="Petrovsky N."/>
            <person name="Piazza S."/>
            <person name="Reed J."/>
            <person name="Reid J.F."/>
            <person name="Ring B.Z."/>
            <person name="Ringwald M."/>
            <person name="Rost B."/>
            <person name="Ruan Y."/>
            <person name="Salzberg S.L."/>
            <person name="Sandelin A."/>
            <person name="Schneider C."/>
            <person name="Schoenbach C."/>
            <person name="Sekiguchi K."/>
            <person name="Semple C.A."/>
            <person name="Seno S."/>
            <person name="Sessa L."/>
            <person name="Sheng Y."/>
            <person name="Shibata Y."/>
            <person name="Shimada H."/>
            <person name="Shimada K."/>
            <person name="Silva D."/>
            <person name="Sinclair B."/>
            <person name="Sperling S."/>
            <person name="Stupka E."/>
            <person name="Sugiura K."/>
            <person name="Sultana R."/>
            <person name="Takenaka Y."/>
            <person name="Taki K."/>
            <person name="Tammoja K."/>
            <person name="Tan S.L."/>
            <person name="Tang S."/>
            <person name="Taylor M.S."/>
            <person name="Tegner J."/>
            <person name="Teichmann S.A."/>
            <person name="Ueda H.R."/>
            <person name="van Nimwegen E."/>
            <person name="Verardo R."/>
            <person name="Wei C.L."/>
            <person name="Yagi K."/>
            <person name="Yamanishi H."/>
            <person name="Zabarovsky E."/>
            <person name="Zhu S."/>
            <person name="Zimmer A."/>
            <person name="Hide W."/>
            <person name="Bult C."/>
            <person name="Grimmond S.M."/>
            <person name="Teasdale R.D."/>
            <person name="Liu E.T."/>
            <person name="Brusic V."/>
            <person name="Quackenbush J."/>
            <person name="Wahlestedt C."/>
            <person name="Mattick J.S."/>
            <person name="Hume D.A."/>
            <person name="Kai C."/>
            <person name="Sasaki D."/>
            <person name="Tomaru Y."/>
            <person name="Fukuda S."/>
            <person name="Kanamori-Katayama M."/>
            <person name="Suzuki M."/>
            <person name="Aoki J."/>
            <person name="Arakawa T."/>
            <person name="Iida J."/>
            <person name="Imamura K."/>
            <person name="Itoh M."/>
            <person name="Kato T."/>
            <person name="Kawaji H."/>
            <person name="Kawagashira N."/>
            <person name="Kawashima T."/>
            <person name="Kojima M."/>
            <person name="Kondo S."/>
            <person name="Konno H."/>
            <person name="Nakano K."/>
            <person name="Ninomiya N."/>
            <person name="Nishio T."/>
            <person name="Okada M."/>
            <person name="Plessy C."/>
            <person name="Shibata K."/>
            <person name="Shiraki T."/>
            <person name="Suzuki S."/>
            <person name="Tagami M."/>
            <person name="Waki K."/>
            <person name="Watahiki A."/>
            <person name="Okamura-Oho Y."/>
            <person name="Suzuki H."/>
            <person name="Kawai J."/>
            <person name="Hayashizaki Y."/>
        </authorList>
    </citation>
    <scope>NUCLEOTIDE SEQUENCE [LARGE SCALE MRNA]</scope>
    <source>
        <strain>C57BL/6J</strain>
        <tissue>Embryo</tissue>
        <tissue>Hippocampus</tissue>
    </source>
</reference>
<reference key="2">
    <citation type="journal article" date="2004" name="Genome Res.">
        <title>The status, quality, and expansion of the NIH full-length cDNA project: the Mammalian Gene Collection (MGC).</title>
        <authorList>
            <consortium name="The MGC Project Team"/>
        </authorList>
    </citation>
    <scope>NUCLEOTIDE SEQUENCE [LARGE SCALE MRNA]</scope>
    <source>
        <strain>FVB/N</strain>
        <tissue>Mammary tumor</tissue>
    </source>
</reference>
<reference key="3">
    <citation type="journal article" date="2008" name="Proc. Natl. Acad. Sci. U.S.A.">
        <title>Transcriptome-based systematic identification of extracellular matrix proteins.</title>
        <authorList>
            <person name="Manabe R."/>
            <person name="Tsutsui K."/>
            <person name="Yamada T."/>
            <person name="Kimura M."/>
            <person name="Nakano I."/>
            <person name="Shimono C."/>
            <person name="Sanzen N."/>
            <person name="Furutani Y."/>
            <person name="Fukuda T."/>
            <person name="Oguri Y."/>
            <person name="Shimamoto K."/>
            <person name="Kiyozumi D."/>
            <person name="Sato Y."/>
            <person name="Sado Y."/>
            <person name="Senoo H."/>
            <person name="Yamashina S."/>
            <person name="Fukuda S."/>
            <person name="Kawai J."/>
            <person name="Sugiura N."/>
            <person name="Kimata K."/>
            <person name="Hayashizaki Y."/>
            <person name="Sekiguchi K."/>
        </authorList>
    </citation>
    <scope>SUBCELLULAR LOCATION</scope>
    <scope>FUNCTION</scope>
</reference>
<proteinExistence type="evidence at transcript level"/>
<gene>
    <name type="primary">Gfod2</name>
</gene>
<comment type="function">
    <text evidence="2">Promotes matrix assembly.</text>
</comment>
<comment type="subcellular location">
    <subcellularLocation>
        <location evidence="2">Secreted</location>
        <location evidence="2">Extracellular space</location>
        <location evidence="2">Extracellular matrix</location>
    </subcellularLocation>
</comment>
<comment type="similarity">
    <text evidence="3">Belongs to the Gfo/Idh/MocA family.</text>
</comment>
<dbReference type="EC" id="1.-.-.-"/>
<dbReference type="EMBL" id="AK017684">
    <property type="protein sequence ID" value="BAB30872.1"/>
    <property type="molecule type" value="mRNA"/>
</dbReference>
<dbReference type="EMBL" id="AK141521">
    <property type="protein sequence ID" value="BAE24716.1"/>
    <property type="molecule type" value="mRNA"/>
</dbReference>
<dbReference type="EMBL" id="BC013623">
    <property type="protein sequence ID" value="AAH13623.1"/>
    <property type="molecule type" value="mRNA"/>
</dbReference>
<dbReference type="CCDS" id="CCDS22612.1"/>
<dbReference type="RefSeq" id="NP_001355315.1">
    <property type="nucleotide sequence ID" value="NM_001368386.1"/>
</dbReference>
<dbReference type="RefSeq" id="NP_081745.1">
    <property type="nucleotide sequence ID" value="NM_027469.5"/>
</dbReference>
<dbReference type="RefSeq" id="XP_017168447.1">
    <property type="nucleotide sequence ID" value="XM_017312958.3"/>
</dbReference>
<dbReference type="SMR" id="Q9CYH5"/>
<dbReference type="FunCoup" id="Q9CYH5">
    <property type="interactions" value="222"/>
</dbReference>
<dbReference type="STRING" id="10090.ENSMUSP00000013294"/>
<dbReference type="GlyGen" id="Q9CYH5">
    <property type="glycosylation" value="1 site, 1 N-linked glycan (1 site)"/>
</dbReference>
<dbReference type="iPTMnet" id="Q9CYH5"/>
<dbReference type="PhosphoSitePlus" id="Q9CYH5"/>
<dbReference type="PaxDb" id="10090-ENSMUSP00000013294"/>
<dbReference type="ProteomicsDB" id="266794"/>
<dbReference type="Pumba" id="Q9CYH5"/>
<dbReference type="Antibodypedia" id="29615">
    <property type="antibodies" value="173 antibodies from 21 providers"/>
</dbReference>
<dbReference type="DNASU" id="70575"/>
<dbReference type="Ensembl" id="ENSMUST00000013294.16">
    <property type="protein sequence ID" value="ENSMUSP00000013294.10"/>
    <property type="gene ID" value="ENSMUSG00000013150.16"/>
</dbReference>
<dbReference type="GeneID" id="70575"/>
<dbReference type="KEGG" id="mmu:70575"/>
<dbReference type="UCSC" id="uc009neb.1">
    <property type="organism name" value="mouse"/>
</dbReference>
<dbReference type="AGR" id="MGI:1917825"/>
<dbReference type="CTD" id="81577"/>
<dbReference type="MGI" id="MGI:1917825">
    <property type="gene designation" value="Gfod2"/>
</dbReference>
<dbReference type="VEuPathDB" id="HostDB:ENSMUSG00000013150"/>
<dbReference type="eggNOG" id="KOG2742">
    <property type="taxonomic scope" value="Eukaryota"/>
</dbReference>
<dbReference type="GeneTree" id="ENSGT00940000156501"/>
<dbReference type="HOGENOM" id="CLU_023194_8_0_1"/>
<dbReference type="InParanoid" id="Q9CYH5"/>
<dbReference type="OMA" id="YVGEIQV"/>
<dbReference type="OrthoDB" id="446809at2759"/>
<dbReference type="PhylomeDB" id="Q9CYH5"/>
<dbReference type="TreeFam" id="TF323246"/>
<dbReference type="BioGRID-ORCS" id="70575">
    <property type="hits" value="2 hits in 76 CRISPR screens"/>
</dbReference>
<dbReference type="ChiTaRS" id="Gfod2">
    <property type="organism name" value="mouse"/>
</dbReference>
<dbReference type="PRO" id="PR:Q9CYH5"/>
<dbReference type="Proteomes" id="UP000000589">
    <property type="component" value="Chromosome 8"/>
</dbReference>
<dbReference type="RNAct" id="Q9CYH5">
    <property type="molecule type" value="protein"/>
</dbReference>
<dbReference type="Bgee" id="ENSMUSG00000013150">
    <property type="expression patterns" value="Expressed in cortical plate and 238 other cell types or tissues"/>
</dbReference>
<dbReference type="ExpressionAtlas" id="Q9CYH5">
    <property type="expression patterns" value="baseline and differential"/>
</dbReference>
<dbReference type="GO" id="GO:0031012">
    <property type="term" value="C:extracellular matrix"/>
    <property type="evidence" value="ECO:0000314"/>
    <property type="project" value="MGI"/>
</dbReference>
<dbReference type="GO" id="GO:0005576">
    <property type="term" value="C:extracellular region"/>
    <property type="evidence" value="ECO:0007669"/>
    <property type="project" value="UniProtKB-KW"/>
</dbReference>
<dbReference type="GO" id="GO:0000166">
    <property type="term" value="F:nucleotide binding"/>
    <property type="evidence" value="ECO:0007669"/>
    <property type="project" value="InterPro"/>
</dbReference>
<dbReference type="GO" id="GO:0016491">
    <property type="term" value="F:oxidoreductase activity"/>
    <property type="evidence" value="ECO:0007669"/>
    <property type="project" value="UniProtKB-KW"/>
</dbReference>
<dbReference type="GO" id="GO:0030198">
    <property type="term" value="P:extracellular matrix organization"/>
    <property type="evidence" value="ECO:0000314"/>
    <property type="project" value="MGI"/>
</dbReference>
<dbReference type="FunFam" id="3.30.360.10:FF:000025">
    <property type="entry name" value="Glucose-fructose oxidoreductase domain-containing protein 2"/>
    <property type="match status" value="1"/>
</dbReference>
<dbReference type="FunFam" id="3.40.50.720:FF:000233">
    <property type="entry name" value="Glucose-fructose oxidoreductase domain-containing protein 2"/>
    <property type="match status" value="1"/>
</dbReference>
<dbReference type="Gene3D" id="3.30.360.10">
    <property type="entry name" value="Dihydrodipicolinate Reductase, domain 2"/>
    <property type="match status" value="1"/>
</dbReference>
<dbReference type="Gene3D" id="3.40.50.720">
    <property type="entry name" value="NAD(P)-binding Rossmann-like Domain"/>
    <property type="match status" value="1"/>
</dbReference>
<dbReference type="InterPro" id="IPR000683">
    <property type="entry name" value="Gfo/Idh/MocA-like_OxRdtase_N"/>
</dbReference>
<dbReference type="InterPro" id="IPR050463">
    <property type="entry name" value="Gfo/Idh/MocA_oxidrdct_glycsds"/>
</dbReference>
<dbReference type="InterPro" id="IPR055170">
    <property type="entry name" value="GFO_IDH_MocA-like_dom"/>
</dbReference>
<dbReference type="InterPro" id="IPR036291">
    <property type="entry name" value="NAD(P)-bd_dom_sf"/>
</dbReference>
<dbReference type="PANTHER" id="PTHR43818">
    <property type="entry name" value="BCDNA.GH03377"/>
    <property type="match status" value="1"/>
</dbReference>
<dbReference type="PANTHER" id="PTHR43818:SF8">
    <property type="entry name" value="GLUCOSE-FRUCTOSE OXIDOREDUCTASE DOMAIN-CONTAINING PROTEIN 2"/>
    <property type="match status" value="1"/>
</dbReference>
<dbReference type="Pfam" id="PF01408">
    <property type="entry name" value="GFO_IDH_MocA"/>
    <property type="match status" value="1"/>
</dbReference>
<dbReference type="Pfam" id="PF22725">
    <property type="entry name" value="GFO_IDH_MocA_C3"/>
    <property type="match status" value="1"/>
</dbReference>
<dbReference type="SUPFAM" id="SSF55347">
    <property type="entry name" value="Glyceraldehyde-3-phosphate dehydrogenase-like, C-terminal domain"/>
    <property type="match status" value="1"/>
</dbReference>
<dbReference type="SUPFAM" id="SSF51735">
    <property type="entry name" value="NAD(P)-binding Rossmann-fold domains"/>
    <property type="match status" value="1"/>
</dbReference>
<feature type="signal peptide" evidence="1">
    <location>
        <begin position="1"/>
        <end position="25"/>
    </location>
</feature>
<feature type="chain" id="PRO_0000282973" description="Glucose-fructose oxidoreductase domain-containing protein 2">
    <location>
        <begin position="26"/>
        <end position="385"/>
    </location>
</feature>
<keyword id="KW-0272">Extracellular matrix</keyword>
<keyword id="KW-0560">Oxidoreductase</keyword>
<keyword id="KW-1185">Reference proteome</keyword>
<keyword id="KW-0964">Secreted</keyword>
<keyword id="KW-0732">Signal</keyword>
<name>GFOD2_MOUSE</name>